<evidence type="ECO:0000255" key="1">
    <source>
        <dbReference type="HAMAP-Rule" id="MF_00576"/>
    </source>
</evidence>
<evidence type="ECO:0000256" key="2">
    <source>
        <dbReference type="SAM" id="MobiDB-lite"/>
    </source>
</evidence>
<organism>
    <name type="scientific">Mycobacterium sp. (strain MCS)</name>
    <dbReference type="NCBI Taxonomy" id="164756"/>
    <lineage>
        <taxon>Bacteria</taxon>
        <taxon>Bacillati</taxon>
        <taxon>Actinomycetota</taxon>
        <taxon>Actinomycetes</taxon>
        <taxon>Mycobacteriales</taxon>
        <taxon>Mycobacteriaceae</taxon>
        <taxon>Mycobacterium</taxon>
    </lineage>
</organism>
<gene>
    <name evidence="1" type="primary">gvpA</name>
    <name type="ordered locus">Mmcs_2334</name>
</gene>
<keyword id="KW-0304">Gas vesicle</keyword>
<proteinExistence type="inferred from homology"/>
<protein>
    <recommendedName>
        <fullName evidence="1">Gas vesicle protein A</fullName>
        <shortName evidence="1">GvpA</shortName>
    </recommendedName>
</protein>
<dbReference type="EMBL" id="CP000384">
    <property type="protein sequence ID" value="ABG08442.1"/>
    <property type="molecule type" value="Genomic_DNA"/>
</dbReference>
<dbReference type="SMR" id="Q1B9J2"/>
<dbReference type="KEGG" id="mmc:Mmcs_2334"/>
<dbReference type="HOGENOM" id="CLU_117660_0_0_11"/>
<dbReference type="BioCyc" id="MSP164756:G1G6O-2386-MONOMER"/>
<dbReference type="GO" id="GO:0033172">
    <property type="term" value="C:gas vesicle shell"/>
    <property type="evidence" value="ECO:0007669"/>
    <property type="project" value="UniProtKB-UniRule"/>
</dbReference>
<dbReference type="GO" id="GO:0012506">
    <property type="term" value="C:vesicle membrane"/>
    <property type="evidence" value="ECO:0007669"/>
    <property type="project" value="InterPro"/>
</dbReference>
<dbReference type="GO" id="GO:0005198">
    <property type="term" value="F:structural molecule activity"/>
    <property type="evidence" value="ECO:0007669"/>
    <property type="project" value="InterPro"/>
</dbReference>
<dbReference type="HAMAP" id="MF_00576">
    <property type="entry name" value="Gas_vesicle_A"/>
    <property type="match status" value="1"/>
</dbReference>
<dbReference type="InterPro" id="IPR000638">
    <property type="entry name" value="Gas-vesicle_GvpA-like"/>
</dbReference>
<dbReference type="InterPro" id="IPR047870">
    <property type="entry name" value="Gas_vesicle_GvpA"/>
</dbReference>
<dbReference type="InterPro" id="IPR050530">
    <property type="entry name" value="GvpA"/>
</dbReference>
<dbReference type="InterPro" id="IPR018493">
    <property type="entry name" value="GvpA-like_CS"/>
</dbReference>
<dbReference type="NCBIfam" id="NF006872">
    <property type="entry name" value="PRK09368.1"/>
    <property type="match status" value="1"/>
</dbReference>
<dbReference type="PANTHER" id="PTHR35344:SF4">
    <property type="entry name" value="GAS VESICLE PROTEIN A1"/>
    <property type="match status" value="1"/>
</dbReference>
<dbReference type="PANTHER" id="PTHR35344">
    <property type="entry name" value="GAS VESICLE STRUCTURAL PROTEIN 2-RELATED"/>
    <property type="match status" value="1"/>
</dbReference>
<dbReference type="Pfam" id="PF00741">
    <property type="entry name" value="Gas_vesicle"/>
    <property type="match status" value="1"/>
</dbReference>
<dbReference type="PROSITE" id="PS00234">
    <property type="entry name" value="GAS_VESICLE_A_1"/>
    <property type="match status" value="1"/>
</dbReference>
<dbReference type="PROSITE" id="PS00669">
    <property type="entry name" value="GAS_VESICLE_A_2"/>
    <property type="match status" value="1"/>
</dbReference>
<feature type="chain" id="PRO_1000025109" description="Gas vesicle protein A">
    <location>
        <begin position="1"/>
        <end position="139"/>
    </location>
</feature>
<feature type="region of interest" description="Disordered" evidence="2">
    <location>
        <begin position="113"/>
        <end position="139"/>
    </location>
</feature>
<feature type="compositionally biased region" description="Basic residues" evidence="2">
    <location>
        <begin position="129"/>
        <end position="139"/>
    </location>
</feature>
<accession>Q1B9J2</accession>
<sequence>MSTAIQPAGTAGGGGSDSNGLADVVDTILDKGLVLDAYVRVSVVGIEILTVDARVVVASVDTYLRYADAVNRLDIVNEDPKSDLGGLVGDVAESATSGVAKGKTTGVLEAAGEKLGDMLTSDEPEPRKATRVRSRRADR</sequence>
<reference key="1">
    <citation type="submission" date="2006-06" db="EMBL/GenBank/DDBJ databases">
        <title>Complete sequence of chromosome of Mycobacterium sp. MCS.</title>
        <authorList>
            <consortium name="US DOE Joint Genome Institute"/>
            <person name="Copeland A."/>
            <person name="Lucas S."/>
            <person name="Lapidus A."/>
            <person name="Barry K."/>
            <person name="Detter J.C."/>
            <person name="Glavina del Rio T."/>
            <person name="Hammon N."/>
            <person name="Israni S."/>
            <person name="Dalin E."/>
            <person name="Tice H."/>
            <person name="Pitluck S."/>
            <person name="Martinez M."/>
            <person name="Schmutz J."/>
            <person name="Larimer F."/>
            <person name="Land M."/>
            <person name="Hauser L."/>
            <person name="Kyrpides N."/>
            <person name="Kim E."/>
            <person name="Miller C.D."/>
            <person name="Hughes J.E."/>
            <person name="Anderson A.J."/>
            <person name="Sims R.C."/>
            <person name="Richardson P."/>
        </authorList>
    </citation>
    <scope>NUCLEOTIDE SEQUENCE [LARGE SCALE GENOMIC DNA]</scope>
    <source>
        <strain>MCS</strain>
    </source>
</reference>
<comment type="function">
    <text evidence="1">Gas vesicles are hollow, gas filled proteinaceous nanostructures found in some microorganisms. During planktonic growth they allow positioning of the organism at a favorable depth for light or nutrient acquisition. GvpA forms the protein shell.</text>
</comment>
<comment type="subunit">
    <text evidence="1">The gas vesicle shell is 2 nm thick and consists of a single layer of this protein. It forms helical ribs nearly perpendicular to the long axis of the vesicle.</text>
</comment>
<comment type="subcellular location">
    <subcellularLocation>
        <location evidence="1">Gas vesicle shell</location>
    </subcellularLocation>
</comment>
<comment type="similarity">
    <text evidence="1">Belongs to the gas vesicle GvpA family.</text>
</comment>
<name>GVPA_MYCSS</name>